<reference key="1">
    <citation type="submission" date="2006-06" db="EMBL/GenBank/DDBJ databases">
        <title>Complete sequence of chromosome of Mycobacterium sp. MCS.</title>
        <authorList>
            <consortium name="US DOE Joint Genome Institute"/>
            <person name="Copeland A."/>
            <person name="Lucas S."/>
            <person name="Lapidus A."/>
            <person name="Barry K."/>
            <person name="Detter J.C."/>
            <person name="Glavina del Rio T."/>
            <person name="Hammon N."/>
            <person name="Israni S."/>
            <person name="Dalin E."/>
            <person name="Tice H."/>
            <person name="Pitluck S."/>
            <person name="Martinez M."/>
            <person name="Schmutz J."/>
            <person name="Larimer F."/>
            <person name="Land M."/>
            <person name="Hauser L."/>
            <person name="Kyrpides N."/>
            <person name="Kim E."/>
            <person name="Miller C.D."/>
            <person name="Hughes J.E."/>
            <person name="Anderson A.J."/>
            <person name="Sims R.C."/>
            <person name="Richardson P."/>
        </authorList>
    </citation>
    <scope>NUCLEOTIDE SEQUENCE [LARGE SCALE GENOMIC DNA]</scope>
    <source>
        <strain>MCS</strain>
    </source>
</reference>
<dbReference type="EMBL" id="CP000384">
    <property type="protein sequence ID" value="ABG10406.1"/>
    <property type="molecule type" value="Genomic_DNA"/>
</dbReference>
<dbReference type="SMR" id="Q1B3X8"/>
<dbReference type="KEGG" id="mmc:Mmcs_4301"/>
<dbReference type="HOGENOM" id="CLU_000445_30_1_11"/>
<dbReference type="BioCyc" id="MSP164756:G1G6O-4394-MONOMER"/>
<dbReference type="GO" id="GO:0005829">
    <property type="term" value="C:cytosol"/>
    <property type="evidence" value="ECO:0007669"/>
    <property type="project" value="TreeGrafter"/>
</dbReference>
<dbReference type="GO" id="GO:0032993">
    <property type="term" value="C:protein-DNA complex"/>
    <property type="evidence" value="ECO:0007669"/>
    <property type="project" value="TreeGrafter"/>
</dbReference>
<dbReference type="GO" id="GO:0000156">
    <property type="term" value="F:phosphorelay response regulator activity"/>
    <property type="evidence" value="ECO:0007669"/>
    <property type="project" value="TreeGrafter"/>
</dbReference>
<dbReference type="GO" id="GO:0000976">
    <property type="term" value="F:transcription cis-regulatory region binding"/>
    <property type="evidence" value="ECO:0007669"/>
    <property type="project" value="TreeGrafter"/>
</dbReference>
<dbReference type="GO" id="GO:0006355">
    <property type="term" value="P:regulation of DNA-templated transcription"/>
    <property type="evidence" value="ECO:0007669"/>
    <property type="project" value="InterPro"/>
</dbReference>
<dbReference type="CDD" id="cd17627">
    <property type="entry name" value="REC_OmpR_PrrA-like"/>
    <property type="match status" value="1"/>
</dbReference>
<dbReference type="CDD" id="cd00383">
    <property type="entry name" value="trans_reg_C"/>
    <property type="match status" value="1"/>
</dbReference>
<dbReference type="FunFam" id="3.40.50.2300:FF:000001">
    <property type="entry name" value="DNA-binding response regulator PhoB"/>
    <property type="match status" value="1"/>
</dbReference>
<dbReference type="FunFam" id="1.10.10.10:FF:000005">
    <property type="entry name" value="Two-component system response regulator"/>
    <property type="match status" value="1"/>
</dbReference>
<dbReference type="Gene3D" id="3.40.50.2300">
    <property type="match status" value="1"/>
</dbReference>
<dbReference type="Gene3D" id="6.10.250.690">
    <property type="match status" value="1"/>
</dbReference>
<dbReference type="Gene3D" id="1.10.10.10">
    <property type="entry name" value="Winged helix-like DNA-binding domain superfamily/Winged helix DNA-binding domain"/>
    <property type="match status" value="1"/>
</dbReference>
<dbReference type="InterPro" id="IPR011006">
    <property type="entry name" value="CheY-like_superfamily"/>
</dbReference>
<dbReference type="InterPro" id="IPR001867">
    <property type="entry name" value="OmpR/PhoB-type_DNA-bd"/>
</dbReference>
<dbReference type="InterPro" id="IPR016032">
    <property type="entry name" value="Sig_transdc_resp-reg_C-effctor"/>
</dbReference>
<dbReference type="InterPro" id="IPR001789">
    <property type="entry name" value="Sig_transdc_resp-reg_receiver"/>
</dbReference>
<dbReference type="InterPro" id="IPR039420">
    <property type="entry name" value="WalR-like"/>
</dbReference>
<dbReference type="InterPro" id="IPR036388">
    <property type="entry name" value="WH-like_DNA-bd_sf"/>
</dbReference>
<dbReference type="PANTHER" id="PTHR48111">
    <property type="entry name" value="REGULATOR OF RPOS"/>
    <property type="match status" value="1"/>
</dbReference>
<dbReference type="PANTHER" id="PTHR48111:SF22">
    <property type="entry name" value="REGULATOR OF RPOS"/>
    <property type="match status" value="1"/>
</dbReference>
<dbReference type="Pfam" id="PF00072">
    <property type="entry name" value="Response_reg"/>
    <property type="match status" value="1"/>
</dbReference>
<dbReference type="Pfam" id="PF00486">
    <property type="entry name" value="Trans_reg_C"/>
    <property type="match status" value="1"/>
</dbReference>
<dbReference type="SMART" id="SM00448">
    <property type="entry name" value="REC"/>
    <property type="match status" value="1"/>
</dbReference>
<dbReference type="SMART" id="SM00862">
    <property type="entry name" value="Trans_reg_C"/>
    <property type="match status" value="1"/>
</dbReference>
<dbReference type="SUPFAM" id="SSF46894">
    <property type="entry name" value="C-terminal effector domain of the bipartite response regulators"/>
    <property type="match status" value="1"/>
</dbReference>
<dbReference type="SUPFAM" id="SSF52172">
    <property type="entry name" value="CheY-like"/>
    <property type="match status" value="1"/>
</dbReference>
<dbReference type="PROSITE" id="PS51755">
    <property type="entry name" value="OMPR_PHOB"/>
    <property type="match status" value="1"/>
</dbReference>
<dbReference type="PROSITE" id="PS50110">
    <property type="entry name" value="RESPONSE_REGULATORY"/>
    <property type="match status" value="1"/>
</dbReference>
<gene>
    <name type="primary">mprA</name>
    <name type="ordered locus">Mmcs_4301</name>
</gene>
<evidence type="ECO:0000250" key="1"/>
<evidence type="ECO:0000255" key="2">
    <source>
        <dbReference type="PROSITE-ProRule" id="PRU00169"/>
    </source>
</evidence>
<evidence type="ECO:0000255" key="3">
    <source>
        <dbReference type="PROSITE-ProRule" id="PRU01091"/>
    </source>
</evidence>
<evidence type="ECO:0000305" key="4"/>
<name>MPRA_MYCSS</name>
<accession>Q1B3X8</accession>
<keyword id="KW-0963">Cytoplasm</keyword>
<keyword id="KW-0238">DNA-binding</keyword>
<keyword id="KW-0597">Phosphoprotein</keyword>
<keyword id="KW-0346">Stress response</keyword>
<keyword id="KW-0804">Transcription</keyword>
<keyword id="KW-0805">Transcription regulation</keyword>
<keyword id="KW-0902">Two-component regulatory system</keyword>
<keyword id="KW-0843">Virulence</keyword>
<proteinExistence type="inferred from homology"/>
<organism>
    <name type="scientific">Mycobacterium sp. (strain MCS)</name>
    <dbReference type="NCBI Taxonomy" id="164756"/>
    <lineage>
        <taxon>Bacteria</taxon>
        <taxon>Bacillati</taxon>
        <taxon>Actinomycetota</taxon>
        <taxon>Actinomycetes</taxon>
        <taxon>Mycobacteriales</taxon>
        <taxon>Mycobacteriaceae</taxon>
        <taxon>Mycobacterium</taxon>
    </lineage>
</organism>
<protein>
    <recommendedName>
        <fullName>Response regulator MprA</fullName>
    </recommendedName>
    <alternativeName>
        <fullName>Mycobacterial persistence regulator A</fullName>
    </alternativeName>
</protein>
<comment type="function">
    <text evidence="1">Member of the two-component regulatory system MprB/MprA which contributes to maintaining a balance among several systems involved in stress resistance and is required for establishment and maintenance of persistent infection in the host. Functions as a transcriptional regulator that recognizes a 19-bp nucleotide motif comprizing two loosely conserved 8-bp direct DNA-binding motif repeats separated by a 3-bp spacer region (By similarity).</text>
</comment>
<comment type="subcellular location">
    <subcellularLocation>
        <location evidence="4">Cytoplasm</location>
    </subcellularLocation>
</comment>
<comment type="PTM">
    <text evidence="1">Phosphorylated and dephosphorylated by MprB.</text>
</comment>
<sequence length="230" mass="25698">MPVRILVVDDDRAVRESLRRSLSFNGYSVELAQDGVEALDLIANNRPDAVVLDVMMPRLDGLEVCRQLRSTGDDLPILVLTARDSVSERVAGLDAGADDYLPKPFALEELLARMRALLRRTSPDEGPDSPALTFLDLTLDPVTREVTRGSRQISLTRTEFALLEMLIANPRRVLTRSRILEEVWGFDFPTSGNALEVYIGYLRRKTEASGEPRLIHTVRGVGYVLRETPP</sequence>
<feature type="chain" id="PRO_0000308426" description="Response regulator MprA">
    <location>
        <begin position="1"/>
        <end position="230"/>
    </location>
</feature>
<feature type="domain" description="Response regulatory" evidence="2">
    <location>
        <begin position="4"/>
        <end position="118"/>
    </location>
</feature>
<feature type="DNA-binding region" description="OmpR/PhoB-type" evidence="3">
    <location>
        <begin position="129"/>
        <end position="227"/>
    </location>
</feature>
<feature type="modified residue" description="4-aspartylphosphate" evidence="2">
    <location>
        <position position="48"/>
    </location>
</feature>